<keyword id="KW-0025">Alternative splicing</keyword>
<keyword id="KW-0963">Cytoplasm</keyword>
<keyword id="KW-0521">NADP</keyword>
<keyword id="KW-0560">Oxidoreductase</keyword>
<keyword id="KW-1267">Proteomics identification</keyword>
<keyword id="KW-1185">Reference proteome</keyword>
<name>AKCL2_HUMAN</name>
<reference key="1">
    <citation type="journal article" date="2003" name="Chem. Biol. Interact.">
        <title>Human testis specific protein: a new member of aldo-keto reductase superfamily.</title>
        <authorList>
            <person name="Nishinaka T."/>
            <person name="Azuma Y."/>
            <person name="Ushijima S."/>
            <person name="Miki T."/>
            <person name="Yabe-Nishimura C."/>
        </authorList>
    </citation>
    <scope>NUCLEOTIDE SEQUENCE [MRNA] (ISOFORMS 2; 3; 4 AND 5)</scope>
    <scope>BIOPHYSICOCHEMICAL PROPERTIES</scope>
    <scope>TISSUE SPECIFICITY</scope>
    <source>
        <tissue>Testis</tissue>
    </source>
</reference>
<reference key="2">
    <citation type="submission" date="2000-05" db="EMBL/GenBank/DDBJ databases">
        <title>LoopADR: a novel human aldo-keto reductase.</title>
        <authorList>
            <person name="Hyndman D.J."/>
            <person name="Li L."/>
            <person name="Flynn T.G."/>
        </authorList>
    </citation>
    <scope>NUCLEOTIDE SEQUENCE [MRNA] (ISOFORM 1)</scope>
    <source>
        <tissue>Small intestine</tissue>
    </source>
</reference>
<reference key="3">
    <citation type="journal article" date="2004" name="Nature">
        <title>The DNA sequence and comparative analysis of human chromosome 10.</title>
        <authorList>
            <person name="Deloukas P."/>
            <person name="Earthrowl M.E."/>
            <person name="Grafham D.V."/>
            <person name="Rubenfield M."/>
            <person name="French L."/>
            <person name="Steward C.A."/>
            <person name="Sims S.K."/>
            <person name="Jones M.C."/>
            <person name="Searle S."/>
            <person name="Scott C."/>
            <person name="Howe K."/>
            <person name="Hunt S.E."/>
            <person name="Andrews T.D."/>
            <person name="Gilbert J.G.R."/>
            <person name="Swarbreck D."/>
            <person name="Ashurst J.L."/>
            <person name="Taylor A."/>
            <person name="Battles J."/>
            <person name="Bird C.P."/>
            <person name="Ainscough R."/>
            <person name="Almeida J.P."/>
            <person name="Ashwell R.I.S."/>
            <person name="Ambrose K.D."/>
            <person name="Babbage A.K."/>
            <person name="Bagguley C.L."/>
            <person name="Bailey J."/>
            <person name="Banerjee R."/>
            <person name="Bates K."/>
            <person name="Beasley H."/>
            <person name="Bray-Allen S."/>
            <person name="Brown A.J."/>
            <person name="Brown J.Y."/>
            <person name="Burford D.C."/>
            <person name="Burrill W."/>
            <person name="Burton J."/>
            <person name="Cahill P."/>
            <person name="Camire D."/>
            <person name="Carter N.P."/>
            <person name="Chapman J.C."/>
            <person name="Clark S.Y."/>
            <person name="Clarke G."/>
            <person name="Clee C.M."/>
            <person name="Clegg S."/>
            <person name="Corby N."/>
            <person name="Coulson A."/>
            <person name="Dhami P."/>
            <person name="Dutta I."/>
            <person name="Dunn M."/>
            <person name="Faulkner L."/>
            <person name="Frankish A."/>
            <person name="Frankland J.A."/>
            <person name="Garner P."/>
            <person name="Garnett J."/>
            <person name="Gribble S."/>
            <person name="Griffiths C."/>
            <person name="Grocock R."/>
            <person name="Gustafson E."/>
            <person name="Hammond S."/>
            <person name="Harley J.L."/>
            <person name="Hart E."/>
            <person name="Heath P.D."/>
            <person name="Ho T.P."/>
            <person name="Hopkins B."/>
            <person name="Horne J."/>
            <person name="Howden P.J."/>
            <person name="Huckle E."/>
            <person name="Hynds C."/>
            <person name="Johnson C."/>
            <person name="Johnson D."/>
            <person name="Kana A."/>
            <person name="Kay M."/>
            <person name="Kimberley A.M."/>
            <person name="Kershaw J.K."/>
            <person name="Kokkinaki M."/>
            <person name="Laird G.K."/>
            <person name="Lawlor S."/>
            <person name="Lee H.M."/>
            <person name="Leongamornlert D.A."/>
            <person name="Laird G."/>
            <person name="Lloyd C."/>
            <person name="Lloyd D.M."/>
            <person name="Loveland J."/>
            <person name="Lovell J."/>
            <person name="McLaren S."/>
            <person name="McLay K.E."/>
            <person name="McMurray A."/>
            <person name="Mashreghi-Mohammadi M."/>
            <person name="Matthews L."/>
            <person name="Milne S."/>
            <person name="Nickerson T."/>
            <person name="Nguyen M."/>
            <person name="Overton-Larty E."/>
            <person name="Palmer S.A."/>
            <person name="Pearce A.V."/>
            <person name="Peck A.I."/>
            <person name="Pelan S."/>
            <person name="Phillimore B."/>
            <person name="Porter K."/>
            <person name="Rice C.M."/>
            <person name="Rogosin A."/>
            <person name="Ross M.T."/>
            <person name="Sarafidou T."/>
            <person name="Sehra H.K."/>
            <person name="Shownkeen R."/>
            <person name="Skuce C.D."/>
            <person name="Smith M."/>
            <person name="Standring L."/>
            <person name="Sycamore N."/>
            <person name="Tester J."/>
            <person name="Thorpe A."/>
            <person name="Torcasso W."/>
            <person name="Tracey A."/>
            <person name="Tromans A."/>
            <person name="Tsolas J."/>
            <person name="Wall M."/>
            <person name="Walsh J."/>
            <person name="Wang H."/>
            <person name="Weinstock K."/>
            <person name="West A.P."/>
            <person name="Willey D.L."/>
            <person name="Whitehead S.L."/>
            <person name="Wilming L."/>
            <person name="Wray P.W."/>
            <person name="Young L."/>
            <person name="Chen Y."/>
            <person name="Lovering R.C."/>
            <person name="Moschonas N.K."/>
            <person name="Siebert R."/>
            <person name="Fechtel K."/>
            <person name="Bentley D."/>
            <person name="Durbin R.M."/>
            <person name="Hubbard T."/>
            <person name="Doucette-Stamm L."/>
            <person name="Beck S."/>
            <person name="Smith D.R."/>
            <person name="Rogers J."/>
        </authorList>
    </citation>
    <scope>NUCLEOTIDE SEQUENCE [LARGE SCALE GENOMIC DNA]</scope>
</reference>
<reference key="4">
    <citation type="journal article" date="2004" name="Genome Res.">
        <title>The status, quality, and expansion of the NIH full-length cDNA project: the Mammalian Gene Collection (MGC).</title>
        <authorList>
            <consortium name="The MGC Project Team"/>
        </authorList>
    </citation>
    <scope>NUCLEOTIDE SEQUENCE [LARGE SCALE MRNA] (ISOFORM 4)</scope>
    <source>
        <tissue>Lung</tissue>
    </source>
</reference>
<reference key="5">
    <citation type="journal article" date="2004" name="Mol. Hum. Reprod.">
        <title>Characterization of htAKR, a novel gene product in the aldo-keto reductase family specifically expressed in human testis.</title>
        <authorList>
            <person name="Azuma Y."/>
            <person name="Nishinaka T."/>
            <person name="Ushijima S."/>
            <person name="Soh J."/>
            <person name="Katsuyama M."/>
            <person name="Lu H.P."/>
            <person name="Kawata M."/>
            <person name="Yabe-Nishimura C."/>
            <person name="Miki T."/>
        </authorList>
    </citation>
    <scope>FUNCTION</scope>
    <scope>BIOPHYSICOCHEMICAL PROPERTIES</scope>
    <scope>TISSUE SPECIFICITY</scope>
    <scope>ALTERNATIVE SPLICING</scope>
</reference>
<gene>
    <name type="primary">AKR1E2</name>
    <name type="synonym">AKR1CL2</name>
    <name type="synonym">AKRDC1</name>
</gene>
<accession>Q96JD6</accession>
<accession>Q86Z16</accession>
<accession>Q86Z17</accession>
<accession>Q86Z18</accession>
<accession>Q9BU71</accession>
<proteinExistence type="evidence at protein level"/>
<evidence type="ECO:0000250" key="1">
    <source>
        <dbReference type="UniProtKB" id="O60218"/>
    </source>
</evidence>
<evidence type="ECO:0000250" key="2">
    <source>
        <dbReference type="UniProtKB" id="P14550"/>
    </source>
</evidence>
<evidence type="ECO:0000250" key="3">
    <source>
        <dbReference type="UniProtKB" id="P82125"/>
    </source>
</evidence>
<evidence type="ECO:0000250" key="4">
    <source>
        <dbReference type="UniProtKB" id="Q9DCT1"/>
    </source>
</evidence>
<evidence type="ECO:0000269" key="5">
    <source>
    </source>
</evidence>
<evidence type="ECO:0000269" key="6">
    <source>
    </source>
</evidence>
<evidence type="ECO:0000303" key="7">
    <source>
    </source>
</evidence>
<evidence type="ECO:0000303" key="8">
    <source>
    </source>
</evidence>
<evidence type="ECO:0000303" key="9">
    <source>
    </source>
</evidence>
<evidence type="ECO:0000305" key="10"/>
<comment type="function">
    <text evidence="4 5 6">Catalyzes the NADPH-dependent reduction of 1,5-anhydro-D-fructose (AF) to 1,5-anhydro-D-glucitol (By similarity). Has low NADPH-dependent reductase activity towards 9,10-phenanthrenequinone (in vitro) (PubMed:12604216, PubMed:15118078).</text>
</comment>
<comment type="catalytic activity">
    <reaction evidence="4">
        <text>1,5-anhydro-D-glucitol + NADP(+) = 1,5-anhydro-D-fructose + NADPH + H(+)</text>
        <dbReference type="Rhea" id="RHEA:20665"/>
        <dbReference type="ChEBI" id="CHEBI:15378"/>
        <dbReference type="ChEBI" id="CHEBI:16070"/>
        <dbReference type="ChEBI" id="CHEBI:16715"/>
        <dbReference type="ChEBI" id="CHEBI:57783"/>
        <dbReference type="ChEBI" id="CHEBI:58349"/>
        <dbReference type="EC" id="1.1.1.263"/>
    </reaction>
</comment>
<comment type="activity regulation">
    <text evidence="3">Inhibited by p-chloromercuribenzoic acid and alkyliodines.</text>
</comment>
<comment type="biophysicochemical properties">
    <kinetics>
        <KM evidence="5">6.1 uM for 9,10-phenanthrenequinone with NADPH as cofactor</KM>
        <KM evidence="6">44.3 uM for 9,10-phenanthrenequinone (at 25 degrees Celsius)</KM>
        <KM evidence="6">166 uM for NADPH (at 25 degrees Celsius)</KM>
        <KM evidence="6">2.3 mM for NADH (at 25 degrees Celsius)</KM>
        <Vmax evidence="5">0.42 nmol/min/mg enzyme towards 9,10-phenanthrenequinone with NADPH as cofactor</Vmax>
    </kinetics>
</comment>
<comment type="subunit">
    <text evidence="3">Monomer.</text>
</comment>
<comment type="subcellular location">
    <subcellularLocation>
        <location evidence="10">Cytoplasm</location>
    </subcellularLocation>
</comment>
<comment type="alternative products">
    <event type="alternative splicing"/>
    <isoform>
        <id>Q96JD6-1</id>
        <name>1</name>
        <sequence type="displayed"/>
    </isoform>
    <isoform>
        <id>Q96JD6-2</id>
        <name>2</name>
        <name evidence="7">HTSP2</name>
        <name evidence="8">htAKR2</name>
        <sequence type="described" ref="VSP_025615"/>
    </isoform>
    <isoform>
        <id>Q96JD6-3</id>
        <name>3</name>
        <name evidence="7">HTSP1</name>
        <name evidence="8">htAKR1</name>
        <sequence type="described" ref="VSP_025615 VSP_025616 VSP_025617"/>
    </isoform>
    <isoform>
        <id>Q96JD6-4</id>
        <name>4</name>
        <name evidence="7">HTSP4</name>
        <name evidence="8">htAKR4</name>
        <sequence type="described" ref="VSP_025616 VSP_025617"/>
    </isoform>
    <isoform>
        <id>Q96JD6-5</id>
        <name>5</name>
        <name evidence="7">HTSP3</name>
        <name evidence="8">htAKR3</name>
        <sequence type="described" ref="VSP_025614"/>
    </isoform>
</comment>
<comment type="tissue specificity">
    <text evidence="5 6">Specifically expressed in testis (PubMed:12604216, PubMed:15118078). Expressed in testicular germ cells and testis interstitial cells (PubMed:15118078).</text>
</comment>
<comment type="similarity">
    <text evidence="10">Belongs to the aldo/keto reductase family.</text>
</comment>
<dbReference type="EC" id="1.1.1.263" evidence="4"/>
<dbReference type="EMBL" id="AB040820">
    <property type="protein sequence ID" value="BAC54565.1"/>
    <property type="molecule type" value="mRNA"/>
</dbReference>
<dbReference type="EMBL" id="AB040821">
    <property type="protein sequence ID" value="BAC54566.1"/>
    <property type="molecule type" value="mRNA"/>
</dbReference>
<dbReference type="EMBL" id="AB040822">
    <property type="protein sequence ID" value="BAC54567.1"/>
    <property type="molecule type" value="mRNA"/>
</dbReference>
<dbReference type="EMBL" id="AB055603">
    <property type="protein sequence ID" value="BAC54568.1"/>
    <property type="molecule type" value="mRNA"/>
</dbReference>
<dbReference type="EMBL" id="AF263242">
    <property type="protein sequence ID" value="AAK58523.1"/>
    <property type="molecule type" value="mRNA"/>
</dbReference>
<dbReference type="EMBL" id="AC091817">
    <property type="status" value="NOT_ANNOTATED_CDS"/>
    <property type="molecule type" value="Genomic_DNA"/>
</dbReference>
<dbReference type="EMBL" id="BC002862">
    <property type="protein sequence ID" value="AAH02862.1"/>
    <property type="molecule type" value="mRNA"/>
</dbReference>
<dbReference type="CCDS" id="CCDS31134.1">
    <molecule id="Q96JD6-1"/>
</dbReference>
<dbReference type="CCDS" id="CCDS59209.1">
    <molecule id="Q96JD6-2"/>
</dbReference>
<dbReference type="CCDS" id="CCDS59210.1">
    <molecule id="Q96JD6-5"/>
</dbReference>
<dbReference type="RefSeq" id="NP_001035267.1">
    <molecule id="Q96JD6-1"/>
    <property type="nucleotide sequence ID" value="NM_001040177.3"/>
</dbReference>
<dbReference type="RefSeq" id="NP_001257950.1">
    <molecule id="Q96JD6-2"/>
    <property type="nucleotide sequence ID" value="NM_001271021.2"/>
</dbReference>
<dbReference type="RefSeq" id="NP_001257954.1">
    <molecule id="Q96JD6-5"/>
    <property type="nucleotide sequence ID" value="NM_001271025.2"/>
</dbReference>
<dbReference type="SMR" id="Q96JD6"/>
<dbReference type="BioGRID" id="123688">
    <property type="interactions" value="1"/>
</dbReference>
<dbReference type="FunCoup" id="Q96JD6">
    <property type="interactions" value="275"/>
</dbReference>
<dbReference type="STRING" id="9606.ENSP00000298375"/>
<dbReference type="BindingDB" id="Q96JD6"/>
<dbReference type="DrugBank" id="DB06077">
    <property type="generic name" value="Lumateperone"/>
</dbReference>
<dbReference type="iPTMnet" id="Q96JD6"/>
<dbReference type="PhosphoSitePlus" id="Q96JD6"/>
<dbReference type="BioMuta" id="AKR1E2"/>
<dbReference type="DMDM" id="269849539"/>
<dbReference type="jPOST" id="Q96JD6"/>
<dbReference type="MassIVE" id="Q96JD6"/>
<dbReference type="PaxDb" id="9606-ENSP00000298375"/>
<dbReference type="PeptideAtlas" id="Q96JD6"/>
<dbReference type="ProteomicsDB" id="76943">
    <molecule id="Q96JD6-1"/>
</dbReference>
<dbReference type="ProteomicsDB" id="76944">
    <molecule id="Q96JD6-2"/>
</dbReference>
<dbReference type="ProteomicsDB" id="76945">
    <molecule id="Q96JD6-3"/>
</dbReference>
<dbReference type="ProteomicsDB" id="76946">
    <molecule id="Q96JD6-4"/>
</dbReference>
<dbReference type="Antibodypedia" id="23956">
    <property type="antibodies" value="173 antibodies from 27 providers"/>
</dbReference>
<dbReference type="DNASU" id="83592"/>
<dbReference type="Ensembl" id="ENST00000298375.12">
    <molecule id="Q96JD6-1"/>
    <property type="protein sequence ID" value="ENSP00000298375.7"/>
    <property type="gene ID" value="ENSG00000165568.18"/>
</dbReference>
<dbReference type="Ensembl" id="ENST00000334019.4">
    <molecule id="Q96JD6-2"/>
    <property type="protein sequence ID" value="ENSP00000335034.4"/>
    <property type="gene ID" value="ENSG00000165568.18"/>
</dbReference>
<dbReference type="Ensembl" id="ENST00000345253.9">
    <molecule id="Q96JD6-5"/>
    <property type="protein sequence ID" value="ENSP00000335603.5"/>
    <property type="gene ID" value="ENSG00000165568.18"/>
</dbReference>
<dbReference type="Ensembl" id="ENST00000463345.5">
    <molecule id="Q96JD6-4"/>
    <property type="protein sequence ID" value="ENSP00000436794.1"/>
    <property type="gene ID" value="ENSG00000165568.18"/>
</dbReference>
<dbReference type="Ensembl" id="ENST00000532248.5">
    <molecule id="Q96JD6-3"/>
    <property type="protein sequence ID" value="ENSP00000432947.1"/>
    <property type="gene ID" value="ENSG00000165568.18"/>
</dbReference>
<dbReference type="GeneID" id="83592"/>
<dbReference type="KEGG" id="hsa:83592"/>
<dbReference type="MANE-Select" id="ENST00000298375.12">
    <property type="protein sequence ID" value="ENSP00000298375.7"/>
    <property type="RefSeq nucleotide sequence ID" value="NM_001040177.3"/>
    <property type="RefSeq protein sequence ID" value="NP_001035267.1"/>
</dbReference>
<dbReference type="UCSC" id="uc001ihi.5">
    <molecule id="Q96JD6-1"/>
    <property type="organism name" value="human"/>
</dbReference>
<dbReference type="AGR" id="HGNC:23437"/>
<dbReference type="CTD" id="83592"/>
<dbReference type="DisGeNET" id="83592"/>
<dbReference type="GeneCards" id="AKR1E2"/>
<dbReference type="HGNC" id="HGNC:23437">
    <property type="gene designation" value="AKR1E2"/>
</dbReference>
<dbReference type="HPA" id="ENSG00000165568">
    <property type="expression patterns" value="Tissue enriched (testis)"/>
</dbReference>
<dbReference type="MalaCards" id="AKR1E2"/>
<dbReference type="MIM" id="617451">
    <property type="type" value="gene"/>
</dbReference>
<dbReference type="neXtProt" id="NX_Q96JD6"/>
<dbReference type="OpenTargets" id="ENSG00000165568"/>
<dbReference type="PharmGKB" id="PA165548224"/>
<dbReference type="VEuPathDB" id="HostDB:ENSG00000165568"/>
<dbReference type="eggNOG" id="KOG1577">
    <property type="taxonomic scope" value="Eukaryota"/>
</dbReference>
<dbReference type="GeneTree" id="ENSGT00940000153272"/>
<dbReference type="HOGENOM" id="CLU_023205_0_0_1"/>
<dbReference type="InParanoid" id="Q96JD6"/>
<dbReference type="OMA" id="AWKAMEG"/>
<dbReference type="OrthoDB" id="416253at2759"/>
<dbReference type="PAN-GO" id="Q96JD6">
    <property type="GO annotations" value="2 GO annotations based on evolutionary models"/>
</dbReference>
<dbReference type="PhylomeDB" id="Q96JD6"/>
<dbReference type="TreeFam" id="TF106492"/>
<dbReference type="BioCyc" id="MetaCyc:HS15341-MONOMER"/>
<dbReference type="PathwayCommons" id="Q96JD6"/>
<dbReference type="SABIO-RK" id="Q96JD6"/>
<dbReference type="BioGRID-ORCS" id="83592">
    <property type="hits" value="12 hits in 1154 CRISPR screens"/>
</dbReference>
<dbReference type="CD-CODE" id="91857CE7">
    <property type="entry name" value="Nucleolus"/>
</dbReference>
<dbReference type="GenomeRNAi" id="83592"/>
<dbReference type="Pharos" id="Q96JD6">
    <property type="development level" value="Tbio"/>
</dbReference>
<dbReference type="PRO" id="PR:Q96JD6"/>
<dbReference type="Proteomes" id="UP000005640">
    <property type="component" value="Chromosome 10"/>
</dbReference>
<dbReference type="RNAct" id="Q96JD6">
    <property type="molecule type" value="protein"/>
</dbReference>
<dbReference type="Bgee" id="ENSG00000165568">
    <property type="expression patterns" value="Expressed in left testis and 148 other cell types or tissues"/>
</dbReference>
<dbReference type="ExpressionAtlas" id="Q96JD6">
    <property type="expression patterns" value="baseline and differential"/>
</dbReference>
<dbReference type="GO" id="GO:0005829">
    <property type="term" value="C:cytosol"/>
    <property type="evidence" value="ECO:0000318"/>
    <property type="project" value="GO_Central"/>
</dbReference>
<dbReference type="GO" id="GO:0050571">
    <property type="term" value="F:1,5-anhydro-D-fructose reductase activity"/>
    <property type="evidence" value="ECO:0007669"/>
    <property type="project" value="UniProtKB-EC"/>
</dbReference>
<dbReference type="GO" id="GO:0004032">
    <property type="term" value="F:aldose reductase (NADPH) activity"/>
    <property type="evidence" value="ECO:0000318"/>
    <property type="project" value="GO_Central"/>
</dbReference>
<dbReference type="GO" id="GO:0016491">
    <property type="term" value="F:oxidoreductase activity"/>
    <property type="evidence" value="ECO:0000314"/>
    <property type="project" value="UniProtKB"/>
</dbReference>
<dbReference type="CDD" id="cd19110">
    <property type="entry name" value="AKR_AKR1E1-2"/>
    <property type="match status" value="1"/>
</dbReference>
<dbReference type="FunFam" id="3.20.20.100:FF:000030">
    <property type="entry name" value="Aldo-keto reductase family 1 member E2"/>
    <property type="match status" value="1"/>
</dbReference>
<dbReference type="Gene3D" id="3.20.20.100">
    <property type="entry name" value="NADP-dependent oxidoreductase domain"/>
    <property type="match status" value="1"/>
</dbReference>
<dbReference type="InterPro" id="IPR020471">
    <property type="entry name" value="AKR"/>
</dbReference>
<dbReference type="InterPro" id="IPR044484">
    <property type="entry name" value="AKR1E2"/>
</dbReference>
<dbReference type="InterPro" id="IPR018170">
    <property type="entry name" value="Aldo/ket_reductase_CS"/>
</dbReference>
<dbReference type="InterPro" id="IPR023210">
    <property type="entry name" value="NADP_OxRdtase_dom"/>
</dbReference>
<dbReference type="InterPro" id="IPR036812">
    <property type="entry name" value="NADP_OxRdtase_dom_sf"/>
</dbReference>
<dbReference type="PANTHER" id="PTHR11732">
    <property type="entry name" value="ALDO/KETO REDUCTASE"/>
    <property type="match status" value="1"/>
</dbReference>
<dbReference type="Pfam" id="PF00248">
    <property type="entry name" value="Aldo_ket_red"/>
    <property type="match status" value="1"/>
</dbReference>
<dbReference type="PIRSF" id="PIRSF000097">
    <property type="entry name" value="AKR"/>
    <property type="match status" value="1"/>
</dbReference>
<dbReference type="PRINTS" id="PR00069">
    <property type="entry name" value="ALDKETRDTASE"/>
</dbReference>
<dbReference type="SUPFAM" id="SSF51430">
    <property type="entry name" value="NAD(P)-linked oxidoreductase"/>
    <property type="match status" value="1"/>
</dbReference>
<dbReference type="PROSITE" id="PS00798">
    <property type="entry name" value="ALDOKETO_REDUCTASE_1"/>
    <property type="match status" value="1"/>
</dbReference>
<dbReference type="PROSITE" id="PS00062">
    <property type="entry name" value="ALDOKETO_REDUCTASE_2"/>
    <property type="match status" value="1"/>
</dbReference>
<sequence>MGDIPAVGLSSWKASPGKVTEAVKEAIDAGYRHFDCAYFYHNEREVGAGIRCKIKEGAVRREDLFIATKLWCTCHKKSLVETACRKSLKALKLNYLDLYLIHWPMGFKPPHPEWIMSCSELSFCLSHPRVQDLPLDESNMVIPSDTDFLDTWEAMEDLVITGLVKNIGVSNFNHEQLERLLNKPGLRFKPLTNQIECHPYLTQKNLISFCQSRDVSVTAYRPLGGSCEGVDLIDNPVIKRIAKEHGKSPAQILIRFQIQRNVIVIPGSITPSHIKENIQVFDFELTQHDMDNILSLNRNLRLAMFPITKNHKDYPFHIEY</sequence>
<organism>
    <name type="scientific">Homo sapiens</name>
    <name type="common">Human</name>
    <dbReference type="NCBI Taxonomy" id="9606"/>
    <lineage>
        <taxon>Eukaryota</taxon>
        <taxon>Metazoa</taxon>
        <taxon>Chordata</taxon>
        <taxon>Craniata</taxon>
        <taxon>Vertebrata</taxon>
        <taxon>Euteleostomi</taxon>
        <taxon>Mammalia</taxon>
        <taxon>Eutheria</taxon>
        <taxon>Euarchontoglires</taxon>
        <taxon>Primates</taxon>
        <taxon>Haplorrhini</taxon>
        <taxon>Catarrhini</taxon>
        <taxon>Hominidae</taxon>
        <taxon>Homo</taxon>
    </lineage>
</organism>
<protein>
    <recommendedName>
        <fullName>1,5-anhydro-D-fructose reductase</fullName>
        <shortName>AF reductase</shortName>
        <ecNumber evidence="4">1.1.1.263</ecNumber>
    </recommendedName>
    <alternativeName>
        <fullName>Aldo-keto reductase family 1 member C-like protein 2</fullName>
    </alternativeName>
    <alternativeName>
        <fullName>Aldo-keto reductase family 1 member E2</fullName>
    </alternativeName>
    <alternativeName>
        <fullName>LoopADR</fullName>
    </alternativeName>
    <alternativeName>
        <fullName evidence="8">Testis aldo-keto reductase</fullName>
        <shortName evidence="8">htAKR</shortName>
    </alternativeName>
    <alternativeName>
        <fullName>Testis-specific protein</fullName>
        <shortName>hTSP</shortName>
    </alternativeName>
</protein>
<feature type="chain" id="PRO_0000287880" description="1,5-anhydro-D-fructose reductase">
    <location>
        <begin position="1"/>
        <end position="320"/>
    </location>
</feature>
<feature type="active site" description="Proton donor" evidence="1">
    <location>
        <position position="40"/>
    </location>
</feature>
<feature type="binding site" evidence="1">
    <location>
        <position position="35"/>
    </location>
    <ligand>
        <name>NADP(+)</name>
        <dbReference type="ChEBI" id="CHEBI:58349"/>
    </ligand>
</feature>
<feature type="binding site" evidence="1">
    <location>
        <position position="102"/>
    </location>
    <ligand>
        <name>substrate</name>
    </ligand>
</feature>
<feature type="binding site" evidence="1">
    <location>
        <position position="194"/>
    </location>
    <ligand>
        <name>NADP(+)</name>
        <dbReference type="ChEBI" id="CHEBI:58349"/>
    </ligand>
</feature>
<feature type="binding site" evidence="1">
    <location>
        <begin position="265"/>
        <end position="277"/>
    </location>
    <ligand>
        <name>NADP(+)</name>
        <dbReference type="ChEBI" id="CHEBI:58349"/>
    </ligand>
</feature>
<feature type="site" description="Lowers pKa of active site Tyr" evidence="2">
    <location>
        <position position="69"/>
    </location>
</feature>
<feature type="splice variant" id="VSP_025614" description="In isoform 5." evidence="7">
    <location>
        <begin position="154"/>
        <end position="251"/>
    </location>
</feature>
<feature type="splice variant" id="VSP_025615" description="In isoform 2 and isoform 3." evidence="7">
    <location>
        <begin position="194"/>
        <end position="250"/>
    </location>
</feature>
<feature type="splice variant" id="VSP_025616" description="In isoform 3 and isoform 4." evidence="7 9">
    <original>I</original>
    <variation>M</variation>
    <location>
        <position position="307"/>
    </location>
</feature>
<feature type="splice variant" id="VSP_025617" description="In isoform 3 and isoform 4." evidence="7 9">
    <location>
        <begin position="308"/>
        <end position="320"/>
    </location>
</feature>
<feature type="sequence variant" id="VAR_032356" description="In dbSNP:rs35429729.">
    <original>C</original>
    <variation>G</variation>
    <location>
        <position position="52"/>
    </location>
</feature>
<feature type="sequence variant" id="VAR_032357" description="In dbSNP:rs17133693.">
    <original>K</original>
    <variation>R</variation>
    <location>
        <position position="86"/>
    </location>
</feature>
<feature type="sequence conflict" description="In Ref. 2; AAK58523." evidence="10" ref="2">
    <original>K</original>
    <variation>N</variation>
    <location>
        <position position="312"/>
    </location>
</feature>